<proteinExistence type="inferred from homology"/>
<protein>
    <recommendedName>
        <fullName evidence="1">33 kDa chaperonin</fullName>
    </recommendedName>
    <alternativeName>
        <fullName evidence="1">Heat shock protein 33 homolog</fullName>
        <shortName evidence="1">HSP33</shortName>
    </alternativeName>
</protein>
<dbReference type="EMBL" id="CP000387">
    <property type="protein sequence ID" value="ABN45555.1"/>
    <property type="molecule type" value="Genomic_DNA"/>
</dbReference>
<dbReference type="RefSeq" id="WP_011837605.1">
    <property type="nucleotide sequence ID" value="NC_009009.1"/>
</dbReference>
<dbReference type="RefSeq" id="YP_001036105.1">
    <property type="nucleotide sequence ID" value="NC_009009.1"/>
</dbReference>
<dbReference type="SMR" id="A3CQV0"/>
<dbReference type="STRING" id="388919.SSA_2190"/>
<dbReference type="KEGG" id="ssa:SSA_2190"/>
<dbReference type="PATRIC" id="fig|388919.9.peg.2075"/>
<dbReference type="eggNOG" id="COG1281">
    <property type="taxonomic scope" value="Bacteria"/>
</dbReference>
<dbReference type="HOGENOM" id="CLU_054493_1_0_9"/>
<dbReference type="OrthoDB" id="9776534at2"/>
<dbReference type="Proteomes" id="UP000002148">
    <property type="component" value="Chromosome"/>
</dbReference>
<dbReference type="GO" id="GO:0005737">
    <property type="term" value="C:cytoplasm"/>
    <property type="evidence" value="ECO:0007669"/>
    <property type="project" value="UniProtKB-SubCell"/>
</dbReference>
<dbReference type="GO" id="GO:0044183">
    <property type="term" value="F:protein folding chaperone"/>
    <property type="evidence" value="ECO:0007669"/>
    <property type="project" value="TreeGrafter"/>
</dbReference>
<dbReference type="GO" id="GO:0051082">
    <property type="term" value="F:unfolded protein binding"/>
    <property type="evidence" value="ECO:0007669"/>
    <property type="project" value="UniProtKB-UniRule"/>
</dbReference>
<dbReference type="GO" id="GO:0042026">
    <property type="term" value="P:protein refolding"/>
    <property type="evidence" value="ECO:0007669"/>
    <property type="project" value="TreeGrafter"/>
</dbReference>
<dbReference type="CDD" id="cd00498">
    <property type="entry name" value="Hsp33"/>
    <property type="match status" value="1"/>
</dbReference>
<dbReference type="Gene3D" id="3.55.30.10">
    <property type="entry name" value="Hsp33 domain"/>
    <property type="match status" value="1"/>
</dbReference>
<dbReference type="Gene3D" id="3.90.1280.10">
    <property type="entry name" value="HSP33 redox switch-like"/>
    <property type="match status" value="1"/>
</dbReference>
<dbReference type="HAMAP" id="MF_00117">
    <property type="entry name" value="HslO"/>
    <property type="match status" value="1"/>
</dbReference>
<dbReference type="InterPro" id="IPR000397">
    <property type="entry name" value="Heat_shock_Hsp33"/>
</dbReference>
<dbReference type="InterPro" id="IPR016154">
    <property type="entry name" value="Heat_shock_Hsp33_C"/>
</dbReference>
<dbReference type="InterPro" id="IPR016153">
    <property type="entry name" value="Heat_shock_Hsp33_N"/>
</dbReference>
<dbReference type="NCBIfam" id="NF001033">
    <property type="entry name" value="PRK00114.1"/>
    <property type="match status" value="1"/>
</dbReference>
<dbReference type="PANTHER" id="PTHR30111">
    <property type="entry name" value="33 KDA CHAPERONIN"/>
    <property type="match status" value="1"/>
</dbReference>
<dbReference type="PANTHER" id="PTHR30111:SF1">
    <property type="entry name" value="33 KDA CHAPERONIN"/>
    <property type="match status" value="1"/>
</dbReference>
<dbReference type="Pfam" id="PF01430">
    <property type="entry name" value="HSP33"/>
    <property type="match status" value="1"/>
</dbReference>
<dbReference type="PIRSF" id="PIRSF005261">
    <property type="entry name" value="Heat_shock_Hsp33"/>
    <property type="match status" value="1"/>
</dbReference>
<dbReference type="SUPFAM" id="SSF64397">
    <property type="entry name" value="Hsp33 domain"/>
    <property type="match status" value="1"/>
</dbReference>
<dbReference type="SUPFAM" id="SSF118352">
    <property type="entry name" value="HSP33 redox switch-like"/>
    <property type="match status" value="1"/>
</dbReference>
<gene>
    <name evidence="1" type="primary">hslO</name>
    <name type="ordered locus">SSA_2190</name>
</gene>
<sequence length="290" mass="31773">MDKIIKTISENGSFRAYVLDSTETVRTAQEKHQTQASSTVALGRTLIASQILAANEKGQTKITVKVLGTSSLGAIITVADTEGNVKGYVQNPGVDIKKTATGEVLVGPFVGQGEFLVITDYGTGNPYNSMTPLISGEIGEDLAFYLTESQQTPSAVGLNVLLDENDKVKVAGGFLVQVLPGAKEAEIARFEKRIQEMPAISRLLESDDHIEALLAAIYGNEPYKRLSEEEIRFQCDCNKERFMNALATLPKADLEEMRDQDQGAEIVCQFCQTAYHFDQNDLEELIRDKS</sequence>
<feature type="chain" id="PRO_1000015584" description="33 kDa chaperonin">
    <location>
        <begin position="1"/>
        <end position="290"/>
    </location>
</feature>
<feature type="disulfide bond" description="Redox-active" evidence="1">
    <location>
        <begin position="235"/>
        <end position="237"/>
    </location>
</feature>
<feature type="disulfide bond" description="Redox-active" evidence="1">
    <location>
        <begin position="268"/>
        <end position="271"/>
    </location>
</feature>
<reference key="1">
    <citation type="journal article" date="2007" name="J. Bacteriol.">
        <title>Genome of the opportunistic pathogen Streptococcus sanguinis.</title>
        <authorList>
            <person name="Xu P."/>
            <person name="Alves J.M."/>
            <person name="Kitten T."/>
            <person name="Brown A."/>
            <person name="Chen Z."/>
            <person name="Ozaki L.S."/>
            <person name="Manque P."/>
            <person name="Ge X."/>
            <person name="Serrano M.G."/>
            <person name="Puiu D."/>
            <person name="Hendricks S."/>
            <person name="Wang Y."/>
            <person name="Chaplin M.D."/>
            <person name="Akan D."/>
            <person name="Paik S."/>
            <person name="Peterson D.L."/>
            <person name="Macrina F.L."/>
            <person name="Buck G.A."/>
        </authorList>
    </citation>
    <scope>NUCLEOTIDE SEQUENCE [LARGE SCALE GENOMIC DNA]</scope>
    <source>
        <strain>SK36</strain>
    </source>
</reference>
<organism>
    <name type="scientific">Streptococcus sanguinis (strain SK36)</name>
    <dbReference type="NCBI Taxonomy" id="388919"/>
    <lineage>
        <taxon>Bacteria</taxon>
        <taxon>Bacillati</taxon>
        <taxon>Bacillota</taxon>
        <taxon>Bacilli</taxon>
        <taxon>Lactobacillales</taxon>
        <taxon>Streptococcaceae</taxon>
        <taxon>Streptococcus</taxon>
    </lineage>
</organism>
<comment type="function">
    <text evidence="1">Redox regulated molecular chaperone. Protects both thermally unfolding and oxidatively damaged proteins from irreversible aggregation. Plays an important role in the bacterial defense system toward oxidative stress.</text>
</comment>
<comment type="subcellular location">
    <subcellularLocation>
        <location evidence="1">Cytoplasm</location>
    </subcellularLocation>
</comment>
<comment type="PTM">
    <text evidence="1">Under oxidizing conditions two disulfide bonds are formed involving the reactive cysteines. Under reducing conditions zinc is bound to the reactive cysteines and the protein is inactive.</text>
</comment>
<comment type="similarity">
    <text evidence="1">Belongs to the HSP33 family.</text>
</comment>
<keyword id="KW-0143">Chaperone</keyword>
<keyword id="KW-0963">Cytoplasm</keyword>
<keyword id="KW-1015">Disulfide bond</keyword>
<keyword id="KW-0676">Redox-active center</keyword>
<keyword id="KW-1185">Reference proteome</keyword>
<keyword id="KW-0862">Zinc</keyword>
<name>HSLO_STRSV</name>
<evidence type="ECO:0000255" key="1">
    <source>
        <dbReference type="HAMAP-Rule" id="MF_00117"/>
    </source>
</evidence>
<accession>A3CQV0</accession>